<proteinExistence type="evidence at protein level"/>
<feature type="signal peptide" evidence="3">
    <location>
        <begin position="1"/>
        <end position="46"/>
    </location>
</feature>
<feature type="chain" id="PRO_5003245589" description="Neurexin-2-beta" evidence="4">
    <location>
        <begin position="47"/>
        <end position="660"/>
    </location>
</feature>
<feature type="topological domain" description="Extracellular" evidence="9">
    <location>
        <begin position="47"/>
        <end position="584"/>
    </location>
</feature>
<feature type="transmembrane region" description="Helical" evidence="4">
    <location>
        <begin position="585"/>
        <end position="605"/>
    </location>
</feature>
<feature type="topological domain" description="Cytoplasmic" evidence="9">
    <location>
        <begin position="606"/>
        <end position="660"/>
    </location>
</feature>
<feature type="domain" description="Laminin G-like" evidence="5">
    <location>
        <begin position="87"/>
        <end position="295"/>
    </location>
</feature>
<feature type="region of interest" description="Disordered" evidence="6">
    <location>
        <begin position="1"/>
        <end position="27"/>
    </location>
</feature>
<feature type="region of interest" description="Disordered" evidence="6">
    <location>
        <begin position="408"/>
        <end position="458"/>
    </location>
</feature>
<feature type="region of interest" description="Disordered" evidence="6">
    <location>
        <begin position="537"/>
        <end position="571"/>
    </location>
</feature>
<feature type="region of interest" description="Disordered" evidence="6">
    <location>
        <begin position="627"/>
        <end position="660"/>
    </location>
</feature>
<feature type="compositionally biased region" description="Gly residues" evidence="6">
    <location>
        <begin position="1"/>
        <end position="10"/>
    </location>
</feature>
<feature type="binding site" evidence="2">
    <location>
        <position position="139"/>
    </location>
    <ligand>
        <name>Ca(2+)</name>
        <dbReference type="ChEBI" id="CHEBI:29108"/>
    </ligand>
</feature>
<feature type="binding site" evidence="2">
    <location>
        <position position="156"/>
    </location>
    <ligand>
        <name>Ca(2+)</name>
        <dbReference type="ChEBI" id="CHEBI:29108"/>
    </ligand>
</feature>
<feature type="binding site" evidence="2">
    <location>
        <position position="238"/>
    </location>
    <ligand>
        <name>Ca(2+)</name>
        <dbReference type="ChEBI" id="CHEBI:29108"/>
    </ligand>
</feature>
<feature type="binding site" evidence="2">
    <location>
        <position position="240"/>
    </location>
    <ligand>
        <name>Ca(2+)</name>
        <dbReference type="ChEBI" id="CHEBI:29108"/>
    </ligand>
</feature>
<feature type="glycosylation site" description="N-linked (GlcNAc...) asparagine" evidence="4">
    <location>
        <position position="186"/>
    </location>
</feature>
<feature type="glycosylation site" description="O-linked (Xyl...) (heparan sulfate) serine" evidence="7">
    <location>
        <position position="350"/>
    </location>
</feature>
<feature type="glycosylation site" description="N-linked (GlcNAc...) asparagine" evidence="4">
    <location>
        <position position="561"/>
    </location>
</feature>
<feature type="mutagenesis site" description="Abolishes heparan sulfate attachment." evidence="7">
    <original>S</original>
    <variation>A</variation>
    <location>
        <position position="350"/>
    </location>
</feature>
<accession>E9PUN2</accession>
<reference evidence="11" key="1">
    <citation type="journal article" date="2009" name="PLoS Biol.">
        <title>Lineage-specific biology revealed by a finished genome assembly of the mouse.</title>
        <authorList>
            <person name="Church D.M."/>
            <person name="Goodstadt L."/>
            <person name="Hillier L.W."/>
            <person name="Zody M.C."/>
            <person name="Goldstein S."/>
            <person name="She X."/>
            <person name="Bult C.J."/>
            <person name="Agarwala R."/>
            <person name="Cherry J.L."/>
            <person name="DiCuccio M."/>
            <person name="Hlavina W."/>
            <person name="Kapustin Y."/>
            <person name="Meric P."/>
            <person name="Maglott D."/>
            <person name="Birtle Z."/>
            <person name="Marques A.C."/>
            <person name="Graves T."/>
            <person name="Zhou S."/>
            <person name="Teague B."/>
            <person name="Potamousis K."/>
            <person name="Churas C."/>
            <person name="Place M."/>
            <person name="Herschleb J."/>
            <person name="Runnheim R."/>
            <person name="Forrest D."/>
            <person name="Amos-Landgraf J."/>
            <person name="Schwartz D.C."/>
            <person name="Cheng Z."/>
            <person name="Lindblad-Toh K."/>
            <person name="Eichler E.E."/>
            <person name="Ponting C.P."/>
        </authorList>
    </citation>
    <scope>NUCLEOTIDE SEQUENCE [LARGE SCALE GENOMIC DNA]</scope>
    <source>
        <strain evidence="11">C57BL/6J</strain>
    </source>
</reference>
<reference evidence="12" key="2">
    <citation type="journal article" date="2010" name="Cell">
        <title>A tissue-specific atlas of mouse protein phosphorylation and expression.</title>
        <authorList>
            <person name="Huttlin E.L."/>
            <person name="Jedrychowski M.P."/>
            <person name="Elias J.E."/>
            <person name="Goswami T."/>
            <person name="Rad R."/>
            <person name="Beausoleil S.A."/>
            <person name="Villen J."/>
            <person name="Haas W."/>
            <person name="Sowa M.E."/>
            <person name="Gygi S.P."/>
        </authorList>
    </citation>
    <scope>IDENTIFICATION BY MASS SPECTROMETRY [LARGE SCALE ANALYSIS]</scope>
</reference>
<reference evidence="9" key="3">
    <citation type="journal article" date="2018" name="Cell">
        <title>Heparan Sulfate Organizes Neuronal Synapses through Neurexin Partnerships.</title>
        <authorList>
            <person name="Zhang P."/>
            <person name="Lu H."/>
            <person name="Peixoto R.T."/>
            <person name="Pines M.K."/>
            <person name="Ge Y."/>
            <person name="Oku S."/>
            <person name="Siddiqui T.J."/>
            <person name="Xie Y."/>
            <person name="Wu W."/>
            <person name="Archer-Hartmann S."/>
            <person name="Yoshida K."/>
            <person name="Tanaka K.F."/>
            <person name="Aricescu A.R."/>
            <person name="Azadi P."/>
            <person name="Gordon M.D."/>
            <person name="Sabatini B.L."/>
            <person name="Wong R.O.L."/>
            <person name="Craig A.M."/>
        </authorList>
    </citation>
    <scope>GLYCOSYLATION AT SER-350</scope>
    <scope>MUTAGENESIS OF SER-350</scope>
</reference>
<reference key="4">
    <citation type="journal article" date="2020" name="J. Biol. Chem.">
        <title>Calsyntenin-3 interacts with both alpha- and beta-neurexins in the regulation of excitatory synaptic innervation in specific Schaffer collateral pathways.</title>
        <authorList>
            <person name="Kim H."/>
            <person name="Kim D."/>
            <person name="Kim J."/>
            <person name="Lee H.Y."/>
            <person name="Park D."/>
            <person name="Kang H."/>
            <person name="Matsuda K."/>
            <person name="Sterky F.H."/>
            <person name="Yuzaki M."/>
            <person name="Kim J.Y."/>
            <person name="Choi S.Y."/>
            <person name="Ko J."/>
            <person name="Um J.W."/>
        </authorList>
    </citation>
    <scope>INTERACTION WITH CLSTN3</scope>
</reference>
<evidence type="ECO:0000250" key="1">
    <source>
        <dbReference type="UniProtKB" id="E9Q7X7"/>
    </source>
</evidence>
<evidence type="ECO:0000250" key="2">
    <source>
        <dbReference type="UniProtKB" id="Q63373"/>
    </source>
</evidence>
<evidence type="ECO:0000250" key="3">
    <source>
        <dbReference type="UniProtKB" id="Q63376"/>
    </source>
</evidence>
<evidence type="ECO:0000255" key="4"/>
<evidence type="ECO:0000255" key="5">
    <source>
        <dbReference type="PROSITE-ProRule" id="PRU00122"/>
    </source>
</evidence>
<evidence type="ECO:0000256" key="6">
    <source>
        <dbReference type="SAM" id="MobiDB-lite"/>
    </source>
</evidence>
<evidence type="ECO:0000269" key="7">
    <source>
    </source>
</evidence>
<evidence type="ECO:0000269" key="8">
    <source>
    </source>
</evidence>
<evidence type="ECO:0000305" key="9"/>
<evidence type="ECO:0000312" key="10">
    <source>
        <dbReference type="MGI" id="MGI:1096362"/>
    </source>
</evidence>
<evidence type="ECO:0000312" key="11">
    <source>
        <dbReference type="Proteomes" id="UP000000589"/>
    </source>
</evidence>
<evidence type="ECO:0007744" key="12">
    <source>
    </source>
</evidence>
<name>NRX2B_MOUSE</name>
<keyword id="KW-0877">Alternative promoter usage</keyword>
<keyword id="KW-0106">Calcium</keyword>
<keyword id="KW-0130">Cell adhesion</keyword>
<keyword id="KW-1003">Cell membrane</keyword>
<keyword id="KW-0966">Cell projection</keyword>
<keyword id="KW-0325">Glycoprotein</keyword>
<keyword id="KW-0357">Heparan sulfate</keyword>
<keyword id="KW-0472">Membrane</keyword>
<keyword id="KW-0479">Metal-binding</keyword>
<keyword id="KW-0654">Proteoglycan</keyword>
<keyword id="KW-1185">Reference proteome</keyword>
<keyword id="KW-0677">Repeat</keyword>
<keyword id="KW-0732">Signal</keyword>
<keyword id="KW-0770">Synapse</keyword>
<keyword id="KW-0812">Transmembrane</keyword>
<keyword id="KW-1133">Transmembrane helix</keyword>
<comment type="function">
    <text evidence="9">Neuronal cell surface protein that may be involved in cell recognition and cell adhesion.</text>
</comment>
<comment type="subunit">
    <text evidence="1 3 8">Interacts (via cytoplasmic C-terminal region) with CASK (By similarity). Specific isoforms bind alpha-dystroglycan and neuroligins NLGN1, NLGN2 and NLGN3 (By similarity). Interacts with CBLN1, CBLN2 and, less avidly, with CBLN4 (By similarity). Interacts with CLSTN3 (PubMed:32434929).</text>
</comment>
<comment type="subcellular location">
    <subcellularLocation>
        <location evidence="9">Presynaptic cell membrane</location>
        <topology evidence="4">Single-pass type I membrane protein</topology>
    </subcellularLocation>
</comment>
<comment type="alternative products">
    <event type="alternative promoter"/>
    <isoform>
        <id>E9PUN2-1</id>
        <name>1b</name>
        <sequence type="displayed"/>
    </isoform>
    <isoform>
        <id>E9Q7X7-1</id>
        <name>1a</name>
        <sequence type="external"/>
    </isoform>
    <text>A number of isoforms, alpha-type and beta-type are produced by alternative promoter usage. Beta-type isoforms differ from alpha-type isoforms in their N-terminus.</text>
</comment>
<comment type="PTM">
    <text evidence="7">O-glycosylated; contains heparan sulfate. Heparan sulfate attachment is required for synapse development by mediating interactions with neuroligins.</text>
</comment>
<comment type="similarity">
    <text evidence="9">Belongs to the neurexin family.</text>
</comment>
<dbReference type="SMR" id="E9PUN2"/>
<dbReference type="iPTMnet" id="E9PUN2"/>
<dbReference type="PeptideAtlas" id="E9PUN2"/>
<dbReference type="ProteomicsDB" id="308346"/>
<dbReference type="Antibodypedia" id="63686">
    <property type="antibodies" value="43 antibodies from 7 providers"/>
</dbReference>
<dbReference type="Ensembl" id="ENSMUST00000113458.8">
    <molecule id="E9PUN2-1"/>
    <property type="protein sequence ID" value="ENSMUSP00000109085.2"/>
    <property type="gene ID" value="ENSMUSG00000033768.18"/>
</dbReference>
<dbReference type="AGR" id="MGI:1096362"/>
<dbReference type="MGI" id="MGI:1096362">
    <property type="gene designation" value="Nrxn2"/>
</dbReference>
<dbReference type="VEuPathDB" id="HostDB:ENSMUSG00000033768"/>
<dbReference type="GeneTree" id="ENSGT00940000155978"/>
<dbReference type="HOGENOM" id="CLU_025785_2_0_1"/>
<dbReference type="ChiTaRS" id="Nrxn2">
    <property type="organism name" value="mouse"/>
</dbReference>
<dbReference type="Proteomes" id="UP000000589">
    <property type="component" value="Chromosome 19"/>
</dbReference>
<dbReference type="Bgee" id="ENSMUSG00000033768">
    <property type="expression patterns" value="Expressed in embryonic brain and 69 other cell types or tissues"/>
</dbReference>
<dbReference type="ExpressionAtlas" id="E9PUN2">
    <property type="expression patterns" value="baseline and differential"/>
</dbReference>
<dbReference type="GO" id="GO:0042995">
    <property type="term" value="C:cell projection"/>
    <property type="evidence" value="ECO:0007669"/>
    <property type="project" value="UniProtKB-KW"/>
</dbReference>
<dbReference type="GO" id="GO:0098978">
    <property type="term" value="C:glutamatergic synapse"/>
    <property type="evidence" value="ECO:0000314"/>
    <property type="project" value="SynGO"/>
</dbReference>
<dbReference type="GO" id="GO:0042734">
    <property type="term" value="C:presynaptic membrane"/>
    <property type="evidence" value="ECO:0000247"/>
    <property type="project" value="MGI"/>
</dbReference>
<dbReference type="GO" id="GO:0032991">
    <property type="term" value="C:protein-containing complex"/>
    <property type="evidence" value="ECO:0000353"/>
    <property type="project" value="MGI"/>
</dbReference>
<dbReference type="GO" id="GO:0005246">
    <property type="term" value="F:calcium channel regulator activity"/>
    <property type="evidence" value="ECO:0000316"/>
    <property type="project" value="MGI"/>
</dbReference>
<dbReference type="GO" id="GO:0046872">
    <property type="term" value="F:metal ion binding"/>
    <property type="evidence" value="ECO:0007669"/>
    <property type="project" value="UniProtKB-KW"/>
</dbReference>
<dbReference type="GO" id="GO:0007155">
    <property type="term" value="P:cell adhesion"/>
    <property type="evidence" value="ECO:0007669"/>
    <property type="project" value="UniProtKB-KW"/>
</dbReference>
<dbReference type="GO" id="GO:0007268">
    <property type="term" value="P:chemical synaptic transmission"/>
    <property type="evidence" value="ECO:0000316"/>
    <property type="project" value="MGI"/>
</dbReference>
<dbReference type="GO" id="GO:0007269">
    <property type="term" value="P:neurotransmitter secretion"/>
    <property type="evidence" value="ECO:0000316"/>
    <property type="project" value="MGI"/>
</dbReference>
<dbReference type="GO" id="GO:0099171">
    <property type="term" value="P:presynaptic modulation of chemical synaptic transmission"/>
    <property type="evidence" value="ECO:0000314"/>
    <property type="project" value="SynGO"/>
</dbReference>
<dbReference type="GO" id="GO:0150052">
    <property type="term" value="P:regulation of postsynapse assembly"/>
    <property type="evidence" value="ECO:0000314"/>
    <property type="project" value="SynGO"/>
</dbReference>
<dbReference type="GO" id="GO:0007416">
    <property type="term" value="P:synapse assembly"/>
    <property type="evidence" value="ECO:0000316"/>
    <property type="project" value="MGI"/>
</dbReference>
<dbReference type="CDD" id="cd00110">
    <property type="entry name" value="LamG"/>
    <property type="match status" value="1"/>
</dbReference>
<dbReference type="FunFam" id="2.60.120.200:FF:000003">
    <property type="entry name" value="neurexin-1 isoform X1"/>
    <property type="match status" value="1"/>
</dbReference>
<dbReference type="Gene3D" id="2.60.120.200">
    <property type="match status" value="1"/>
</dbReference>
<dbReference type="InterPro" id="IPR013320">
    <property type="entry name" value="ConA-like_dom_sf"/>
</dbReference>
<dbReference type="InterPro" id="IPR001791">
    <property type="entry name" value="Laminin_G"/>
</dbReference>
<dbReference type="InterPro" id="IPR003585">
    <property type="entry name" value="Neurexin-like"/>
</dbReference>
<dbReference type="InterPro" id="IPR050372">
    <property type="entry name" value="Neurexin-related_CASP"/>
</dbReference>
<dbReference type="PANTHER" id="PTHR15036:SF52">
    <property type="entry name" value="NEUREXIN-2"/>
    <property type="match status" value="1"/>
</dbReference>
<dbReference type="PANTHER" id="PTHR15036">
    <property type="entry name" value="PIKACHURIN-LIKE PROTEIN"/>
    <property type="match status" value="1"/>
</dbReference>
<dbReference type="Pfam" id="PF02210">
    <property type="entry name" value="Laminin_G_2"/>
    <property type="match status" value="1"/>
</dbReference>
<dbReference type="SMART" id="SM00294">
    <property type="entry name" value="4.1m"/>
    <property type="match status" value="1"/>
</dbReference>
<dbReference type="SMART" id="SM00282">
    <property type="entry name" value="LamG"/>
    <property type="match status" value="1"/>
</dbReference>
<dbReference type="SUPFAM" id="SSF49899">
    <property type="entry name" value="Concanavalin A-like lectins/glucanases"/>
    <property type="match status" value="1"/>
</dbReference>
<dbReference type="PROSITE" id="PS50025">
    <property type="entry name" value="LAM_G_DOMAIN"/>
    <property type="match status" value="1"/>
</dbReference>
<sequence>MPPGGSGQGGCPRRPPALAGPLPPPPPPPPLPLLLGLLLLLGAAEGARVSSSLSTTHHVHHFHSKHGTVPIAINRMPFLTRSGHAGTTYIFGKGGALITYTWPPNDRPSTRMDRLAVGFSTHQRSAVLVRVDSASGLGDYLQLHIDQGTVGVIFNVGTDDITIDEPNAIVSDGKYHVVRFTRSGGNATLQVDSWPVNERYPAGNFDNERLAIARQRIPYRLGRVVDEWLLDKGRQLTIFNSQAAIKIGGRDQGRPFQGQVSGLYYNGLKVLALAAESDPNVRTEGHLRLVGEGPSVLLSAETTATTLLADMATTIMETTTTMATTTTRRGRSPTMRDSTTQNTDDLLVASAECPSDDEDLEECEPSTGGELILPIITEDSLDPPPVATRSPFVPPPPTFYPFLTGVGATQDTLPPPAARRPSSGGPCQAERDDSDCEEPVEASGFASGEVFDSSLPPTDDEDFYTTFPLVTDRTTLLSPRKPRPNLRTDGATGAPGVLFAPSAPAPNLPAGKMNHRDPLQPLLENPPLGPGVPTAFEPRRPPPLRPGVTSAPGFPRLPTANPTGPGERGPPGAVEVIRESSSTTGMVVGIVAAAALCILILLYAMYKYRNRDEGSYQVDQSRNYISNSAQSNGAVVKEKAPAAPKTPSKAKKNKDKEYYV</sequence>
<gene>
    <name evidence="10" type="primary">Nrxn2</name>
</gene>
<protein>
    <recommendedName>
        <fullName evidence="9">Neurexin-2-beta</fullName>
    </recommendedName>
    <alternativeName>
        <fullName evidence="9">Neurexin II-beta</fullName>
    </alternativeName>
</protein>
<organism evidence="11">
    <name type="scientific">Mus musculus</name>
    <name type="common">Mouse</name>
    <dbReference type="NCBI Taxonomy" id="10090"/>
    <lineage>
        <taxon>Eukaryota</taxon>
        <taxon>Metazoa</taxon>
        <taxon>Chordata</taxon>
        <taxon>Craniata</taxon>
        <taxon>Vertebrata</taxon>
        <taxon>Euteleostomi</taxon>
        <taxon>Mammalia</taxon>
        <taxon>Eutheria</taxon>
        <taxon>Euarchontoglires</taxon>
        <taxon>Glires</taxon>
        <taxon>Rodentia</taxon>
        <taxon>Myomorpha</taxon>
        <taxon>Muroidea</taxon>
        <taxon>Muridae</taxon>
        <taxon>Murinae</taxon>
        <taxon>Mus</taxon>
        <taxon>Mus</taxon>
    </lineage>
</organism>